<gene>
    <name evidence="1" type="primary">moaA</name>
    <name type="ordered locus">CLI_2007</name>
</gene>
<sequence length="319" mass="36393">MLDKHGRKINYLRVSVTDRCNLRCVYCMPPEGIVKKEHDNIMRYEEIFKVVKSASLLGVNKIRFTGGEPLILKDIDKLIYNTSKINSIKDIAMTTNAILLEDMVEELKKAGLKRVNISLDSLKEDRFKSITRGGDINKVFKSIEKSLSIGMKPIKINTVIMKGINDDEIDDFMNLTKKYPISVRFIELMPIGEGRKLYKDGYISSEEIISKHSDLIPVETDKSSTALLYKFKESKENIGFISPMSCKFCSGCNRVRLTSEGTLKPCLHSEKEVDLKNYVDSSQALLSKINETIYNKPLEHHMIEEKESKSKKMMYQIGG</sequence>
<dbReference type="EC" id="4.1.99.22" evidence="1"/>
<dbReference type="EMBL" id="CP000728">
    <property type="protein sequence ID" value="ABS40331.1"/>
    <property type="molecule type" value="Genomic_DNA"/>
</dbReference>
<dbReference type="RefSeq" id="WP_012099964.1">
    <property type="nucleotide sequence ID" value="NC_009699.1"/>
</dbReference>
<dbReference type="SMR" id="A7GEQ5"/>
<dbReference type="KEGG" id="cbf:CLI_2007"/>
<dbReference type="HOGENOM" id="CLU_009273_0_1_9"/>
<dbReference type="UniPathway" id="UPA00344"/>
<dbReference type="Proteomes" id="UP000002410">
    <property type="component" value="Chromosome"/>
</dbReference>
<dbReference type="GO" id="GO:0051539">
    <property type="term" value="F:4 iron, 4 sulfur cluster binding"/>
    <property type="evidence" value="ECO:0007669"/>
    <property type="project" value="UniProtKB-UniRule"/>
</dbReference>
<dbReference type="GO" id="GO:0061799">
    <property type="term" value="F:cyclic pyranopterin monophosphate synthase activity"/>
    <property type="evidence" value="ECO:0007669"/>
    <property type="project" value="TreeGrafter"/>
</dbReference>
<dbReference type="GO" id="GO:0061798">
    <property type="term" value="F:GTP 3',8'-cyclase activity"/>
    <property type="evidence" value="ECO:0007669"/>
    <property type="project" value="UniProtKB-UniRule"/>
</dbReference>
<dbReference type="GO" id="GO:0005525">
    <property type="term" value="F:GTP binding"/>
    <property type="evidence" value="ECO:0007669"/>
    <property type="project" value="UniProtKB-UniRule"/>
</dbReference>
<dbReference type="GO" id="GO:0046872">
    <property type="term" value="F:metal ion binding"/>
    <property type="evidence" value="ECO:0007669"/>
    <property type="project" value="UniProtKB-KW"/>
</dbReference>
<dbReference type="GO" id="GO:1904047">
    <property type="term" value="F:S-adenosyl-L-methionine binding"/>
    <property type="evidence" value="ECO:0007669"/>
    <property type="project" value="UniProtKB-UniRule"/>
</dbReference>
<dbReference type="GO" id="GO:0006777">
    <property type="term" value="P:Mo-molybdopterin cofactor biosynthetic process"/>
    <property type="evidence" value="ECO:0007669"/>
    <property type="project" value="UniProtKB-UniRule"/>
</dbReference>
<dbReference type="CDD" id="cd01335">
    <property type="entry name" value="Radical_SAM"/>
    <property type="match status" value="1"/>
</dbReference>
<dbReference type="CDD" id="cd21117">
    <property type="entry name" value="Twitch_MoaA"/>
    <property type="match status" value="1"/>
</dbReference>
<dbReference type="Gene3D" id="3.20.20.70">
    <property type="entry name" value="Aldolase class I"/>
    <property type="match status" value="1"/>
</dbReference>
<dbReference type="HAMAP" id="MF_01225_B">
    <property type="entry name" value="MoaA_B"/>
    <property type="match status" value="1"/>
</dbReference>
<dbReference type="InterPro" id="IPR013785">
    <property type="entry name" value="Aldolase_TIM"/>
</dbReference>
<dbReference type="InterPro" id="IPR006638">
    <property type="entry name" value="Elp3/MiaA/NifB-like_rSAM"/>
</dbReference>
<dbReference type="InterPro" id="IPR013483">
    <property type="entry name" value="MoaA"/>
</dbReference>
<dbReference type="InterPro" id="IPR000385">
    <property type="entry name" value="MoaA_NifB_PqqE_Fe-S-bd_CS"/>
</dbReference>
<dbReference type="InterPro" id="IPR010505">
    <property type="entry name" value="MoaA_twitch"/>
</dbReference>
<dbReference type="InterPro" id="IPR050105">
    <property type="entry name" value="MoCo_biosynth_MoaA/MoaC"/>
</dbReference>
<dbReference type="InterPro" id="IPR007197">
    <property type="entry name" value="rSAM"/>
</dbReference>
<dbReference type="NCBIfam" id="TIGR02666">
    <property type="entry name" value="moaA"/>
    <property type="match status" value="1"/>
</dbReference>
<dbReference type="NCBIfam" id="NF001199">
    <property type="entry name" value="PRK00164.2-1"/>
    <property type="match status" value="1"/>
</dbReference>
<dbReference type="PANTHER" id="PTHR22960:SF0">
    <property type="entry name" value="MOLYBDENUM COFACTOR BIOSYNTHESIS PROTEIN 1"/>
    <property type="match status" value="1"/>
</dbReference>
<dbReference type="PANTHER" id="PTHR22960">
    <property type="entry name" value="MOLYBDOPTERIN COFACTOR SYNTHESIS PROTEIN A"/>
    <property type="match status" value="1"/>
</dbReference>
<dbReference type="Pfam" id="PF13353">
    <property type="entry name" value="Fer4_12"/>
    <property type="match status" value="1"/>
</dbReference>
<dbReference type="Pfam" id="PF06463">
    <property type="entry name" value="Mob_synth_C"/>
    <property type="match status" value="1"/>
</dbReference>
<dbReference type="Pfam" id="PF04055">
    <property type="entry name" value="Radical_SAM"/>
    <property type="match status" value="1"/>
</dbReference>
<dbReference type="SFLD" id="SFLDG01383">
    <property type="entry name" value="cyclic_pyranopterin_phosphate"/>
    <property type="match status" value="1"/>
</dbReference>
<dbReference type="SFLD" id="SFLDG01072">
    <property type="entry name" value="dehydrogenase_like"/>
    <property type="match status" value="1"/>
</dbReference>
<dbReference type="SMART" id="SM00729">
    <property type="entry name" value="Elp3"/>
    <property type="match status" value="1"/>
</dbReference>
<dbReference type="SUPFAM" id="SSF102114">
    <property type="entry name" value="Radical SAM enzymes"/>
    <property type="match status" value="1"/>
</dbReference>
<dbReference type="PROSITE" id="PS01305">
    <property type="entry name" value="MOAA_NIFB_PQQE"/>
    <property type="match status" value="1"/>
</dbReference>
<dbReference type="PROSITE" id="PS51918">
    <property type="entry name" value="RADICAL_SAM"/>
    <property type="match status" value="1"/>
</dbReference>
<comment type="function">
    <text evidence="1">Catalyzes the cyclization of GTP to (8S)-3',8-cyclo-7,8-dihydroguanosine 5'-triphosphate.</text>
</comment>
<comment type="catalytic activity">
    <reaction evidence="1">
        <text>GTP + AH2 + S-adenosyl-L-methionine = (8S)-3',8-cyclo-7,8-dihydroguanosine 5'-triphosphate + 5'-deoxyadenosine + L-methionine + A + H(+)</text>
        <dbReference type="Rhea" id="RHEA:49576"/>
        <dbReference type="ChEBI" id="CHEBI:13193"/>
        <dbReference type="ChEBI" id="CHEBI:15378"/>
        <dbReference type="ChEBI" id="CHEBI:17319"/>
        <dbReference type="ChEBI" id="CHEBI:17499"/>
        <dbReference type="ChEBI" id="CHEBI:37565"/>
        <dbReference type="ChEBI" id="CHEBI:57844"/>
        <dbReference type="ChEBI" id="CHEBI:59789"/>
        <dbReference type="ChEBI" id="CHEBI:131766"/>
        <dbReference type="EC" id="4.1.99.22"/>
    </reaction>
</comment>
<comment type="cofactor">
    <cofactor evidence="1">
        <name>[4Fe-4S] cluster</name>
        <dbReference type="ChEBI" id="CHEBI:49883"/>
    </cofactor>
    <text evidence="1">Binds 2 [4Fe-4S] clusters. Binds 1 [4Fe-4S] cluster coordinated with 3 cysteines and an exchangeable S-adenosyl-L-methionine and 1 [4Fe-4S] cluster coordinated with 3 cysteines and the GTP-derived substrate.</text>
</comment>
<comment type="pathway">
    <text evidence="1">Cofactor biosynthesis; molybdopterin biosynthesis.</text>
</comment>
<comment type="subunit">
    <text evidence="1">Monomer and homodimer.</text>
</comment>
<comment type="similarity">
    <text evidence="1">Belongs to the radical SAM superfamily. MoaA family.</text>
</comment>
<organism>
    <name type="scientific">Clostridium botulinum (strain Langeland / NCTC 10281 / Type F)</name>
    <dbReference type="NCBI Taxonomy" id="441772"/>
    <lineage>
        <taxon>Bacteria</taxon>
        <taxon>Bacillati</taxon>
        <taxon>Bacillota</taxon>
        <taxon>Clostridia</taxon>
        <taxon>Eubacteriales</taxon>
        <taxon>Clostridiaceae</taxon>
        <taxon>Clostridium</taxon>
    </lineage>
</organism>
<keyword id="KW-0004">4Fe-4S</keyword>
<keyword id="KW-0342">GTP-binding</keyword>
<keyword id="KW-0408">Iron</keyword>
<keyword id="KW-0411">Iron-sulfur</keyword>
<keyword id="KW-0456">Lyase</keyword>
<keyword id="KW-0479">Metal-binding</keyword>
<keyword id="KW-0501">Molybdenum cofactor biosynthesis</keyword>
<keyword id="KW-0547">Nucleotide-binding</keyword>
<keyword id="KW-0949">S-adenosyl-L-methionine</keyword>
<name>MOAA_CLOBL</name>
<reference key="1">
    <citation type="submission" date="2007-06" db="EMBL/GenBank/DDBJ databases">
        <authorList>
            <person name="Brinkac L.M."/>
            <person name="Daugherty S."/>
            <person name="Dodson R.J."/>
            <person name="Madupu R."/>
            <person name="Brown J.L."/>
            <person name="Bruce D."/>
            <person name="Detter C."/>
            <person name="Munk C."/>
            <person name="Smith L.A."/>
            <person name="Smith T.J."/>
            <person name="White O."/>
            <person name="Brettin T.S."/>
        </authorList>
    </citation>
    <scope>NUCLEOTIDE SEQUENCE [LARGE SCALE GENOMIC DNA]</scope>
    <source>
        <strain>Langeland / NCTC 10281 / Type F</strain>
    </source>
</reference>
<protein>
    <recommendedName>
        <fullName evidence="1">GTP 3',8-cyclase</fullName>
        <ecNumber evidence="1">4.1.99.22</ecNumber>
    </recommendedName>
    <alternativeName>
        <fullName evidence="1">Molybdenum cofactor biosynthesis protein A</fullName>
    </alternativeName>
</protein>
<feature type="chain" id="PRO_1000054187" description="GTP 3',8-cyclase">
    <location>
        <begin position="1"/>
        <end position="319"/>
    </location>
</feature>
<feature type="domain" description="Radical SAM core" evidence="2">
    <location>
        <begin position="4"/>
        <end position="227"/>
    </location>
</feature>
<feature type="binding site" evidence="1">
    <location>
        <position position="13"/>
    </location>
    <ligand>
        <name>GTP</name>
        <dbReference type="ChEBI" id="CHEBI:37565"/>
    </ligand>
</feature>
<feature type="binding site" evidence="1">
    <location>
        <position position="20"/>
    </location>
    <ligand>
        <name>[4Fe-4S] cluster</name>
        <dbReference type="ChEBI" id="CHEBI:49883"/>
        <label>1</label>
        <note>4Fe-4S-S-AdoMet</note>
    </ligand>
</feature>
<feature type="binding site" evidence="1">
    <location>
        <position position="24"/>
    </location>
    <ligand>
        <name>[4Fe-4S] cluster</name>
        <dbReference type="ChEBI" id="CHEBI:49883"/>
        <label>1</label>
        <note>4Fe-4S-S-AdoMet</note>
    </ligand>
</feature>
<feature type="binding site" evidence="1">
    <location>
        <position position="26"/>
    </location>
    <ligand>
        <name>S-adenosyl-L-methionine</name>
        <dbReference type="ChEBI" id="CHEBI:59789"/>
    </ligand>
</feature>
<feature type="binding site" evidence="1">
    <location>
        <position position="27"/>
    </location>
    <ligand>
        <name>[4Fe-4S] cluster</name>
        <dbReference type="ChEBI" id="CHEBI:49883"/>
        <label>1</label>
        <note>4Fe-4S-S-AdoMet</note>
    </ligand>
</feature>
<feature type="binding site" evidence="1">
    <location>
        <position position="63"/>
    </location>
    <ligand>
        <name>GTP</name>
        <dbReference type="ChEBI" id="CHEBI:37565"/>
    </ligand>
</feature>
<feature type="binding site" evidence="1">
    <location>
        <position position="67"/>
    </location>
    <ligand>
        <name>S-adenosyl-L-methionine</name>
        <dbReference type="ChEBI" id="CHEBI:59789"/>
    </ligand>
</feature>
<feature type="binding site" evidence="1">
    <location>
        <position position="94"/>
    </location>
    <ligand>
        <name>GTP</name>
        <dbReference type="ChEBI" id="CHEBI:37565"/>
    </ligand>
</feature>
<feature type="binding site" evidence="1">
    <location>
        <position position="118"/>
    </location>
    <ligand>
        <name>S-adenosyl-L-methionine</name>
        <dbReference type="ChEBI" id="CHEBI:59789"/>
    </ligand>
</feature>
<feature type="binding site" evidence="1">
    <location>
        <position position="155"/>
    </location>
    <ligand>
        <name>GTP</name>
        <dbReference type="ChEBI" id="CHEBI:37565"/>
    </ligand>
</feature>
<feature type="binding site" evidence="1">
    <location>
        <position position="189"/>
    </location>
    <ligand>
        <name>S-adenosyl-L-methionine</name>
        <dbReference type="ChEBI" id="CHEBI:59789"/>
    </ligand>
</feature>
<feature type="binding site" evidence="1">
    <location>
        <position position="249"/>
    </location>
    <ligand>
        <name>[4Fe-4S] cluster</name>
        <dbReference type="ChEBI" id="CHEBI:49883"/>
        <label>2</label>
        <note>4Fe-4S-substrate</note>
    </ligand>
</feature>
<feature type="binding site" evidence="1">
    <location>
        <position position="252"/>
    </location>
    <ligand>
        <name>[4Fe-4S] cluster</name>
        <dbReference type="ChEBI" id="CHEBI:49883"/>
        <label>2</label>
        <note>4Fe-4S-substrate</note>
    </ligand>
</feature>
<feature type="binding site" evidence="1">
    <location>
        <begin position="254"/>
        <end position="256"/>
    </location>
    <ligand>
        <name>GTP</name>
        <dbReference type="ChEBI" id="CHEBI:37565"/>
    </ligand>
</feature>
<feature type="binding site" evidence="1">
    <location>
        <position position="266"/>
    </location>
    <ligand>
        <name>[4Fe-4S] cluster</name>
        <dbReference type="ChEBI" id="CHEBI:49883"/>
        <label>2</label>
        <note>4Fe-4S-substrate</note>
    </ligand>
</feature>
<proteinExistence type="inferred from homology"/>
<evidence type="ECO:0000255" key="1">
    <source>
        <dbReference type="HAMAP-Rule" id="MF_01225"/>
    </source>
</evidence>
<evidence type="ECO:0000255" key="2">
    <source>
        <dbReference type="PROSITE-ProRule" id="PRU01266"/>
    </source>
</evidence>
<accession>A7GEQ5</accession>